<sequence>MATEQTILVGKKPATNYVIATVMAFNAGVKRVVLKARGAAISKAVSTAVMVRDRFLPGKVQIKDIKVLSDKVQGQGGRERTVAAVEIVLEMA</sequence>
<evidence type="ECO:0000255" key="1">
    <source>
        <dbReference type="HAMAP-Rule" id="MF_01122"/>
    </source>
</evidence>
<proteinExistence type="inferred from homology"/>
<name>ALBA_PYRNV</name>
<accession>B1Y992</accession>
<dbReference type="EMBL" id="CP001014">
    <property type="protein sequence ID" value="ACB40321.1"/>
    <property type="molecule type" value="Genomic_DNA"/>
</dbReference>
<dbReference type="RefSeq" id="WP_012350740.1">
    <property type="nucleotide sequence ID" value="NC_010525.1"/>
</dbReference>
<dbReference type="SMR" id="B1Y992"/>
<dbReference type="STRING" id="444157.Tneu_1396"/>
<dbReference type="GeneID" id="6164979"/>
<dbReference type="KEGG" id="tne:Tneu_1396"/>
<dbReference type="eggNOG" id="arCOG01753">
    <property type="taxonomic scope" value="Archaea"/>
</dbReference>
<dbReference type="HOGENOM" id="CLU_110989_1_0_2"/>
<dbReference type="OrthoDB" id="10360at2157"/>
<dbReference type="Proteomes" id="UP000001694">
    <property type="component" value="Chromosome"/>
</dbReference>
<dbReference type="GO" id="GO:0005694">
    <property type="term" value="C:chromosome"/>
    <property type="evidence" value="ECO:0007669"/>
    <property type="project" value="UniProtKB-SubCell"/>
</dbReference>
<dbReference type="GO" id="GO:0005737">
    <property type="term" value="C:cytoplasm"/>
    <property type="evidence" value="ECO:0007669"/>
    <property type="project" value="UniProtKB-SubCell"/>
</dbReference>
<dbReference type="GO" id="GO:0003690">
    <property type="term" value="F:double-stranded DNA binding"/>
    <property type="evidence" value="ECO:0007669"/>
    <property type="project" value="UniProtKB-UniRule"/>
</dbReference>
<dbReference type="GO" id="GO:0003723">
    <property type="term" value="F:RNA binding"/>
    <property type="evidence" value="ECO:0007669"/>
    <property type="project" value="InterPro"/>
</dbReference>
<dbReference type="GO" id="GO:0030261">
    <property type="term" value="P:chromosome condensation"/>
    <property type="evidence" value="ECO:0007669"/>
    <property type="project" value="UniProtKB-KW"/>
</dbReference>
<dbReference type="Gene3D" id="3.30.110.20">
    <property type="entry name" value="Alba-like domain"/>
    <property type="match status" value="1"/>
</dbReference>
<dbReference type="HAMAP" id="MF_01122">
    <property type="entry name" value="AlbA"/>
    <property type="match status" value="1"/>
</dbReference>
<dbReference type="InterPro" id="IPR036882">
    <property type="entry name" value="Alba-like_dom_sf"/>
</dbReference>
<dbReference type="InterPro" id="IPR013795">
    <property type="entry name" value="DNA/RNA-bd_Alba"/>
</dbReference>
<dbReference type="InterPro" id="IPR002775">
    <property type="entry name" value="DNA/RNA-bd_Alba-like"/>
</dbReference>
<dbReference type="NCBIfam" id="TIGR00285">
    <property type="entry name" value="DNA-binding protein Alba"/>
    <property type="match status" value="1"/>
</dbReference>
<dbReference type="NCBIfam" id="NF003088">
    <property type="entry name" value="PRK04015.1"/>
    <property type="match status" value="1"/>
</dbReference>
<dbReference type="Pfam" id="PF01918">
    <property type="entry name" value="Alba"/>
    <property type="match status" value="1"/>
</dbReference>
<dbReference type="PIRSF" id="PIRSF028732">
    <property type="entry name" value="Alba"/>
    <property type="match status" value="1"/>
</dbReference>
<dbReference type="SUPFAM" id="SSF82704">
    <property type="entry name" value="AlbA-like"/>
    <property type="match status" value="1"/>
</dbReference>
<protein>
    <recommendedName>
        <fullName evidence="1">DNA/RNA-binding protein Alba</fullName>
    </recommendedName>
</protein>
<gene>
    <name evidence="1" type="primary">albA</name>
    <name type="ordered locus">Tneu_1396</name>
</gene>
<comment type="function">
    <text evidence="1">Binds double-stranded DNA tightly but without sequence specificity. Involved in DNA compaction.</text>
</comment>
<comment type="subcellular location">
    <subcellularLocation>
        <location evidence="1">Cytoplasm</location>
    </subcellularLocation>
    <subcellularLocation>
        <location evidence="1">Chromosome</location>
    </subcellularLocation>
</comment>
<comment type="PTM">
    <text evidence="1">Acetylated. Acetylation at Lys-11 decreases DNA-binding affinity.</text>
</comment>
<comment type="similarity">
    <text evidence="1">Belongs to the histone-like Alba family.</text>
</comment>
<organism>
    <name type="scientific">Pyrobaculum neutrophilum (strain DSM 2338 / JCM 9278 / NBRC 100436 / V24Sta)</name>
    <name type="common">Thermoproteus neutrophilus</name>
    <dbReference type="NCBI Taxonomy" id="444157"/>
    <lineage>
        <taxon>Archaea</taxon>
        <taxon>Thermoproteota</taxon>
        <taxon>Thermoprotei</taxon>
        <taxon>Thermoproteales</taxon>
        <taxon>Thermoproteaceae</taxon>
        <taxon>Pyrobaculum</taxon>
    </lineage>
</organism>
<reference key="1">
    <citation type="submission" date="2008-03" db="EMBL/GenBank/DDBJ databases">
        <title>Complete sequence of Thermoproteus neutrophilus V24Sta.</title>
        <authorList>
            <consortium name="US DOE Joint Genome Institute"/>
            <person name="Copeland A."/>
            <person name="Lucas S."/>
            <person name="Lapidus A."/>
            <person name="Glavina del Rio T."/>
            <person name="Dalin E."/>
            <person name="Tice H."/>
            <person name="Bruce D."/>
            <person name="Goodwin L."/>
            <person name="Pitluck S."/>
            <person name="Sims D."/>
            <person name="Brettin T."/>
            <person name="Detter J.C."/>
            <person name="Han C."/>
            <person name="Kuske C.R."/>
            <person name="Schmutz J."/>
            <person name="Larimer F."/>
            <person name="Land M."/>
            <person name="Hauser L."/>
            <person name="Kyrpides N."/>
            <person name="Mikhailova N."/>
            <person name="Biddle J.F."/>
            <person name="Zhang Z."/>
            <person name="Fitz-Gibbon S.T."/>
            <person name="Lowe T.M."/>
            <person name="Saltikov C."/>
            <person name="House C.H."/>
            <person name="Richardson P."/>
        </authorList>
    </citation>
    <scope>NUCLEOTIDE SEQUENCE [LARGE SCALE GENOMIC DNA]</scope>
    <source>
        <strain>DSM 2338 / JCM 9278 / NBRC 100436 / V24Sta</strain>
    </source>
</reference>
<keyword id="KW-0007">Acetylation</keyword>
<keyword id="KW-0158">Chromosome</keyword>
<keyword id="KW-0963">Cytoplasm</keyword>
<keyword id="KW-0226">DNA condensation</keyword>
<keyword id="KW-0238">DNA-binding</keyword>
<feature type="chain" id="PRO_1000137257" description="DNA/RNA-binding protein Alba">
    <location>
        <begin position="1"/>
        <end position="92"/>
    </location>
</feature>
<feature type="modified residue" description="N6-acetyllysine" evidence="1">
    <location>
        <position position="11"/>
    </location>
</feature>